<dbReference type="EMBL" id="JH159155">
    <property type="protein sequence ID" value="EGZ14456.1"/>
    <property type="molecule type" value="Genomic_DNA"/>
</dbReference>
<dbReference type="SMR" id="G4ZJX4"/>
<dbReference type="EnsemblProtists" id="EGZ14456">
    <property type="protein sequence ID" value="EGZ14456"/>
    <property type="gene ID" value="PHYSODRAFT_286162"/>
</dbReference>
<dbReference type="KEGG" id="psoj:PHYSODRAFT_286162"/>
<dbReference type="InParanoid" id="G4ZJX4"/>
<dbReference type="Proteomes" id="UP000002640">
    <property type="component" value="Unassembled WGS sequence"/>
</dbReference>
<dbReference type="GO" id="GO:0005576">
    <property type="term" value="C:extracellular region"/>
    <property type="evidence" value="ECO:0007669"/>
    <property type="project" value="UniProtKB-SubCell"/>
</dbReference>
<dbReference type="GO" id="GO:0030430">
    <property type="term" value="C:host cell cytoplasm"/>
    <property type="evidence" value="ECO:0007669"/>
    <property type="project" value="UniProtKB-SubCell"/>
</dbReference>
<dbReference type="GO" id="GO:0042025">
    <property type="term" value="C:host cell nucleus"/>
    <property type="evidence" value="ECO:0007669"/>
    <property type="project" value="UniProtKB-SubCell"/>
</dbReference>
<dbReference type="InterPro" id="IPR031825">
    <property type="entry name" value="RXLR"/>
</dbReference>
<dbReference type="Pfam" id="PF16810">
    <property type="entry name" value="RXLR"/>
    <property type="match status" value="1"/>
</dbReference>
<gene>
    <name evidence="4" type="primary">Avh23</name>
    <name type="ORF">PHYSODRAFT_286162</name>
</gene>
<protein>
    <recommendedName>
        <fullName evidence="4">RxLR effector protein Avh23</fullName>
    </recommendedName>
    <alternativeName>
        <fullName evidence="4">Avirulence homolog protein 23</fullName>
    </alternativeName>
</protein>
<accession>G4ZJX4</accession>
<proteinExistence type="evidence at protein level"/>
<evidence type="ECO:0000255" key="1"/>
<evidence type="ECO:0000269" key="2">
    <source>
    </source>
</evidence>
<evidence type="ECO:0000269" key="3">
    <source>
    </source>
</evidence>
<evidence type="ECO:0000303" key="4">
    <source>
    </source>
</evidence>
<evidence type="ECO:0000305" key="5"/>
<evidence type="ECO:0000305" key="6">
    <source>
    </source>
</evidence>
<comment type="function">
    <text evidence="2 3">Effector that suppresses plant defense responses during the early stages of pathogen infection. Suppresses cell death induced by effectors and PAMPs in plant hosts (PubMed:21653195). Acts as a modulator of histone acetyltransferase (HAT) in plants. Avh23 binds to the ADA2 subunit of the HAT complex SAGA and disrupts its assembly by interfering with the association of ADA2 with the catalytic subunit GCN5. As such, Avh23 suppresses H3K9 acetylation mediated by the ADA2/GCN5 module and increases plant susceptibility (PubMed:28318979).</text>
</comment>
<comment type="subunit">
    <text evidence="3">Interacts with host histone acetyl transferase SAGA complex subunit ADA2.</text>
</comment>
<comment type="subcellular location">
    <subcellularLocation>
        <location evidence="3">Secreted</location>
    </subcellularLocation>
    <subcellularLocation>
        <location evidence="3">Host nucleus</location>
    </subcellularLocation>
    <subcellularLocation>
        <location evidence="3">Host cytoplasm</location>
    </subcellularLocation>
    <text evidence="3">Location into the host nucleus is required for virulence.</text>
</comment>
<comment type="domain">
    <text evidence="6">The RxLR-dEER motif acts to carry the protein into the host cell cytoplasm through binding to cell surface phosphatidylinositol-3-phosphate.</text>
</comment>
<comment type="domain">
    <text evidence="3">The two internal repeats IR1 and IR2, in the C-terminus, are required for the interaction with host ADA2.</text>
</comment>
<comment type="disruption phenotype">
    <text evidence="3">Leads to reduced virulence on etiolated soybean hypocotyls.</text>
</comment>
<comment type="similarity">
    <text evidence="5">Belongs to the RxLR effector family.</text>
</comment>
<sequence>MRLTYFLTVIVVATLHAGGTALATAEAPNHAAIVNVASADNVHSLDTTAEIGGRMLRKVKEDTVSKKDHEERGPGAILERQTAFVKKLFSRQNAIVNRAQGAFQRQNAFVNRDQGAFQRQNAFVKRAIQRQNHFKLSDNA</sequence>
<name>AVH23_PHYSP</name>
<organism>
    <name type="scientific">Phytophthora sojae (strain P6497)</name>
    <name type="common">Soybean stem and root rot agent</name>
    <name type="synonym">Phytophthora megasperma f. sp. glycines</name>
    <dbReference type="NCBI Taxonomy" id="1094619"/>
    <lineage>
        <taxon>Eukaryota</taxon>
        <taxon>Sar</taxon>
        <taxon>Stramenopiles</taxon>
        <taxon>Oomycota</taxon>
        <taxon>Peronosporales</taxon>
        <taxon>Peronosporaceae</taxon>
        <taxon>Phytophthora</taxon>
    </lineage>
</organism>
<keyword id="KW-1035">Host cytoplasm</keyword>
<keyword id="KW-1048">Host nucleus</keyword>
<keyword id="KW-1185">Reference proteome</keyword>
<keyword id="KW-0677">Repeat</keyword>
<keyword id="KW-0964">Secreted</keyword>
<keyword id="KW-0732">Signal</keyword>
<keyword id="KW-0843">Virulence</keyword>
<reference key="1">
    <citation type="journal article" date="2006" name="Science">
        <title>Phytophthora genome sequences uncover evolutionary origins and mechanisms of pathogenesis.</title>
        <authorList>
            <person name="Tyler B.M."/>
            <person name="Tripathy S."/>
            <person name="Zhang X."/>
            <person name="Dehal P."/>
            <person name="Jiang R.H.Y."/>
            <person name="Aerts A."/>
            <person name="Arredondo F.D."/>
            <person name="Baxter L."/>
            <person name="Bensasson D."/>
            <person name="Beynon J.L."/>
            <person name="Chapman J."/>
            <person name="Damasceno C.M.B."/>
            <person name="Dorrance A.E."/>
            <person name="Dou D."/>
            <person name="Dickerman A.W."/>
            <person name="Dubchak I.L."/>
            <person name="Garbelotto M."/>
            <person name="Gijzen M."/>
            <person name="Gordon S.G."/>
            <person name="Govers F."/>
            <person name="Grunwald N.J."/>
            <person name="Huang W."/>
            <person name="Ivors K.L."/>
            <person name="Jones R.W."/>
            <person name="Kamoun S."/>
            <person name="Krampis K."/>
            <person name="Lamour K.H."/>
            <person name="Lee M.-K."/>
            <person name="McDonald W.H."/>
            <person name="Medina M."/>
            <person name="Meijer H.J.G."/>
            <person name="Nordberg E.K."/>
            <person name="Maclean D.J."/>
            <person name="Ospina-Giraldo M.D."/>
            <person name="Morris P.F."/>
            <person name="Phuntumart V."/>
            <person name="Putnam N.H."/>
            <person name="Rash S."/>
            <person name="Rose J.K.C."/>
            <person name="Sakihama Y."/>
            <person name="Salamov A.A."/>
            <person name="Savidor A."/>
            <person name="Scheuring C.F."/>
            <person name="Smith B.M."/>
            <person name="Sobral B.W.S."/>
            <person name="Terry A."/>
            <person name="Torto-Alalibo T.A."/>
            <person name="Win J."/>
            <person name="Xu Z."/>
            <person name="Zhang H."/>
            <person name="Grigoriev I.V."/>
            <person name="Rokhsar D.S."/>
            <person name="Boore J.L."/>
        </authorList>
    </citation>
    <scope>NUCLEOTIDE SEQUENCE [LARGE SCALE GENOMIC DNA]</scope>
    <source>
        <strain>P6497</strain>
    </source>
</reference>
<reference key="2">
    <citation type="journal article" date="2011" name="Plant Cell">
        <title>Transcriptional programming and functional interactions within the Phytophthora sojae RXLR effector repertoire.</title>
        <authorList>
            <person name="Wang Q."/>
            <person name="Han C."/>
            <person name="Ferreira A.O."/>
            <person name="Yu X."/>
            <person name="Ye W."/>
            <person name="Tripathy S."/>
            <person name="Kale S.D."/>
            <person name="Gu B."/>
            <person name="Sheng Y."/>
            <person name="Sui Y."/>
            <person name="Wang X."/>
            <person name="Zhang Z."/>
            <person name="Cheng B."/>
            <person name="Dong S."/>
            <person name="Shan W."/>
            <person name="Zheng X."/>
            <person name="Dou D."/>
            <person name="Tyler B.M."/>
            <person name="Wang Y."/>
        </authorList>
    </citation>
    <scope>IDENTIFICATION</scope>
    <scope>FUNCTION</scope>
    <scope>DOMAIN</scope>
</reference>
<reference key="3">
    <citation type="journal article" date="2017" name="Curr. Biol.">
        <title>A Phytophthora effector manipulates host histone acetylation and reprograms defense gene expression to promote infection.</title>
        <authorList>
            <person name="Kong L."/>
            <person name="Qiu X."/>
            <person name="Kang J."/>
            <person name="Wang Y."/>
            <person name="Chen H."/>
            <person name="Huang J."/>
            <person name="Qiu M."/>
            <person name="Zhao Y."/>
            <person name="Kong G."/>
            <person name="Ma Z."/>
            <person name="Wang Y."/>
            <person name="Ye W."/>
            <person name="Dong S."/>
            <person name="Ma W."/>
            <person name="Wang Y."/>
        </authorList>
    </citation>
    <scope>FUNCTION</scope>
    <scope>DISRUPTION PHENOTYPE</scope>
    <scope>DOMAIN</scope>
    <scope>MUTAGENESIS OF PHE-109; VAL-110; ARG-112; PHE-123; VAL-124 AND ARG-126</scope>
</reference>
<feature type="signal peptide" evidence="1">
    <location>
        <begin position="1"/>
        <end position="21"/>
    </location>
</feature>
<feature type="chain" id="PRO_5003472259" description="RxLR effector protein Avh23">
    <location>
        <begin position="22"/>
        <end position="140"/>
    </location>
</feature>
<feature type="repeat" description="ADA2-binding IR1" evidence="3">
    <location>
        <begin position="100"/>
        <end position="113"/>
    </location>
</feature>
<feature type="repeat" description="ADA2-binding IR2" evidence="3">
    <location>
        <begin position="114"/>
        <end position="127"/>
    </location>
</feature>
<feature type="short sequence motif" description="RxLR-dEER" evidence="6">
    <location>
        <begin position="54"/>
        <end position="72"/>
    </location>
</feature>
<feature type="mutagenesis site" description="Impairs interaction with host ADA2 and subsequent virulence; when associated with A-110, A-112, A-123, A-124 and A-126." evidence="3">
    <original>F</original>
    <variation>A</variation>
    <location>
        <position position="109"/>
    </location>
</feature>
<feature type="mutagenesis site" description="Impairs interaction with host ADA2 and subsequent virulence; when associated with A-109, A-112, A-123, A-124 and A-126." evidence="3">
    <original>V</original>
    <variation>A</variation>
    <location>
        <position position="110"/>
    </location>
</feature>
<feature type="mutagenesis site" description="Impairs interaction with host ADA2 and subsequent virulence; when associated with A-1090, A-110, A-123, A-124 and A-1267." evidence="3">
    <original>R</original>
    <variation>A</variation>
    <location>
        <position position="112"/>
    </location>
</feature>
<feature type="mutagenesis site" description="Impairs interaction with host ADA2 and subsequent virulence; when associated with A-109, A-110, A-112, A-124 and A-126." evidence="3">
    <original>F</original>
    <variation>A</variation>
    <location>
        <position position="123"/>
    </location>
</feature>
<feature type="mutagenesis site" description="Impairs interaction with host ADA2 and subsequent virulence; when associated with A-109, A-110, A-112, A-123 and A-126." evidence="3">
    <original>V</original>
    <variation>A</variation>
    <location>
        <position position="124"/>
    </location>
</feature>
<feature type="mutagenesis site" description="Impairs interaction with host ADA2 and subsequent virulence; when associated with A-109, A-110, A-112, A-123 and A-124." evidence="3">
    <original>R</original>
    <variation>A</variation>
    <location>
        <position position="126"/>
    </location>
</feature>